<gene>
    <name evidence="1" type="primary">tfb</name>
    <name type="ordered locus">Mboo_2311</name>
</gene>
<organism>
    <name type="scientific">Methanoregula boonei (strain DSM 21154 / JCM 14090 / 6A8)</name>
    <dbReference type="NCBI Taxonomy" id="456442"/>
    <lineage>
        <taxon>Archaea</taxon>
        <taxon>Methanobacteriati</taxon>
        <taxon>Methanobacteriota</taxon>
        <taxon>Stenosarchaea group</taxon>
        <taxon>Methanomicrobia</taxon>
        <taxon>Methanomicrobiales</taxon>
        <taxon>Methanoregulaceae</taxon>
        <taxon>Methanoregula</taxon>
    </lineage>
</organism>
<dbReference type="EMBL" id="CP000780">
    <property type="protein sequence ID" value="ABS56825.1"/>
    <property type="molecule type" value="Genomic_DNA"/>
</dbReference>
<dbReference type="RefSeq" id="WP_012107885.1">
    <property type="nucleotide sequence ID" value="NC_009712.1"/>
</dbReference>
<dbReference type="SMR" id="A7IAR4"/>
<dbReference type="STRING" id="456442.Mboo_2311"/>
<dbReference type="GeneID" id="5409810"/>
<dbReference type="KEGG" id="mbn:Mboo_2311"/>
<dbReference type="eggNOG" id="arCOG01981">
    <property type="taxonomic scope" value="Archaea"/>
</dbReference>
<dbReference type="HOGENOM" id="CLU_043736_0_1_2"/>
<dbReference type="OrthoDB" id="7429at2157"/>
<dbReference type="Proteomes" id="UP000002408">
    <property type="component" value="Chromosome"/>
</dbReference>
<dbReference type="GO" id="GO:0097550">
    <property type="term" value="C:transcription preinitiation complex"/>
    <property type="evidence" value="ECO:0007669"/>
    <property type="project" value="TreeGrafter"/>
</dbReference>
<dbReference type="GO" id="GO:0003700">
    <property type="term" value="F:DNA-binding transcription factor activity"/>
    <property type="evidence" value="ECO:0007669"/>
    <property type="project" value="UniProtKB-UniRule"/>
</dbReference>
<dbReference type="GO" id="GO:0017025">
    <property type="term" value="F:TBP-class protein binding"/>
    <property type="evidence" value="ECO:0007669"/>
    <property type="project" value="InterPro"/>
</dbReference>
<dbReference type="GO" id="GO:0008270">
    <property type="term" value="F:zinc ion binding"/>
    <property type="evidence" value="ECO:0007669"/>
    <property type="project" value="UniProtKB-UniRule"/>
</dbReference>
<dbReference type="GO" id="GO:0070897">
    <property type="term" value="P:transcription preinitiation complex assembly"/>
    <property type="evidence" value="ECO:0007669"/>
    <property type="project" value="InterPro"/>
</dbReference>
<dbReference type="CDD" id="cd20549">
    <property type="entry name" value="CYCLIN_TFIIB_archaea_like_rpt1"/>
    <property type="match status" value="1"/>
</dbReference>
<dbReference type="CDD" id="cd20550">
    <property type="entry name" value="CYCLIN_TFIIB_archaea_like_rpt2"/>
    <property type="match status" value="1"/>
</dbReference>
<dbReference type="FunFam" id="1.10.472.10:FF:000023">
    <property type="entry name" value="Transcription initiation factor IIB"/>
    <property type="match status" value="1"/>
</dbReference>
<dbReference type="FunFam" id="1.10.472.170:FF:000001">
    <property type="entry name" value="Transcription initiation factor IIB"/>
    <property type="match status" value="1"/>
</dbReference>
<dbReference type="Gene3D" id="1.10.472.170">
    <property type="match status" value="1"/>
</dbReference>
<dbReference type="Gene3D" id="1.10.472.10">
    <property type="entry name" value="Cyclin-like"/>
    <property type="match status" value="1"/>
</dbReference>
<dbReference type="HAMAP" id="MF_00383">
    <property type="entry name" value="TF2B_arch"/>
    <property type="match status" value="1"/>
</dbReference>
<dbReference type="InterPro" id="IPR013763">
    <property type="entry name" value="Cyclin-like_dom"/>
</dbReference>
<dbReference type="InterPro" id="IPR036915">
    <property type="entry name" value="Cyclin-like_sf"/>
</dbReference>
<dbReference type="InterPro" id="IPR000812">
    <property type="entry name" value="TFIIB"/>
</dbReference>
<dbReference type="InterPro" id="IPR023484">
    <property type="entry name" value="TFIIB_arc"/>
</dbReference>
<dbReference type="InterPro" id="IPR023486">
    <property type="entry name" value="TFIIB_CS"/>
</dbReference>
<dbReference type="InterPro" id="IPR013150">
    <property type="entry name" value="TFIIB_cyclin"/>
</dbReference>
<dbReference type="InterPro" id="IPR013137">
    <property type="entry name" value="Znf_TFIIB"/>
</dbReference>
<dbReference type="NCBIfam" id="NF001658">
    <property type="entry name" value="PRK00423.1"/>
    <property type="match status" value="1"/>
</dbReference>
<dbReference type="PANTHER" id="PTHR11618:SF13">
    <property type="entry name" value="TRANSCRIPTION INITIATION FACTOR IIB"/>
    <property type="match status" value="1"/>
</dbReference>
<dbReference type="PANTHER" id="PTHR11618">
    <property type="entry name" value="TRANSCRIPTION INITIATION FACTOR IIB-RELATED"/>
    <property type="match status" value="1"/>
</dbReference>
<dbReference type="Pfam" id="PF00382">
    <property type="entry name" value="TFIIB"/>
    <property type="match status" value="2"/>
</dbReference>
<dbReference type="Pfam" id="PF08271">
    <property type="entry name" value="Zn_Ribbon_TF"/>
    <property type="match status" value="1"/>
</dbReference>
<dbReference type="PRINTS" id="PR00685">
    <property type="entry name" value="TIFACTORIIB"/>
</dbReference>
<dbReference type="SMART" id="SM00385">
    <property type="entry name" value="CYCLIN"/>
    <property type="match status" value="2"/>
</dbReference>
<dbReference type="SUPFAM" id="SSF47954">
    <property type="entry name" value="Cyclin-like"/>
    <property type="match status" value="2"/>
</dbReference>
<dbReference type="SUPFAM" id="SSF57783">
    <property type="entry name" value="Zinc beta-ribbon"/>
    <property type="match status" value="1"/>
</dbReference>
<dbReference type="PROSITE" id="PS00782">
    <property type="entry name" value="TFIIB"/>
    <property type="match status" value="2"/>
</dbReference>
<dbReference type="PROSITE" id="PS51134">
    <property type="entry name" value="ZF_TFIIB"/>
    <property type="match status" value="1"/>
</dbReference>
<feature type="chain" id="PRO_1000080107" description="Transcription initiation factor IIB">
    <location>
        <begin position="1"/>
        <end position="334"/>
    </location>
</feature>
<feature type="repeat" description="1">
    <location>
        <begin position="151"/>
        <end position="234"/>
    </location>
</feature>
<feature type="repeat" description="2">
    <location>
        <begin position="245"/>
        <end position="326"/>
    </location>
</feature>
<feature type="zinc finger region" description="TFIIB-type" evidence="2">
    <location>
        <begin position="34"/>
        <end position="65"/>
    </location>
</feature>
<feature type="binding site" evidence="2">
    <location>
        <position position="38"/>
    </location>
    <ligand>
        <name>Zn(2+)</name>
        <dbReference type="ChEBI" id="CHEBI:29105"/>
    </ligand>
</feature>
<feature type="binding site" evidence="2">
    <location>
        <position position="41"/>
    </location>
    <ligand>
        <name>Zn(2+)</name>
        <dbReference type="ChEBI" id="CHEBI:29105"/>
    </ligand>
</feature>
<feature type="binding site" evidence="2">
    <location>
        <position position="57"/>
    </location>
    <ligand>
        <name>Zn(2+)</name>
        <dbReference type="ChEBI" id="CHEBI:29105"/>
    </ligand>
</feature>
<feature type="binding site" evidence="2">
    <location>
        <position position="60"/>
    </location>
    <ligand>
        <name>Zn(2+)</name>
        <dbReference type="ChEBI" id="CHEBI:29105"/>
    </ligand>
</feature>
<keyword id="KW-0479">Metal-binding</keyword>
<keyword id="KW-1185">Reference proteome</keyword>
<keyword id="KW-0677">Repeat</keyword>
<keyword id="KW-0804">Transcription</keyword>
<keyword id="KW-0805">Transcription regulation</keyword>
<keyword id="KW-0862">Zinc</keyword>
<keyword id="KW-0863">Zinc-finger</keyword>
<name>TF2B_METB6</name>
<comment type="function">
    <text evidence="1">Stabilizes TBP binding to an archaeal box-A promoter. Also responsible for recruiting RNA polymerase II to the pre-initiation complex (DNA-TBP-TFIIB).</text>
</comment>
<comment type="similarity">
    <text evidence="1">Belongs to the TFIIB family.</text>
</comment>
<accession>A7IAR4</accession>
<evidence type="ECO:0000255" key="1">
    <source>
        <dbReference type="HAMAP-Rule" id="MF_00383"/>
    </source>
</evidence>
<evidence type="ECO:0000255" key="2">
    <source>
        <dbReference type="PROSITE-ProRule" id="PRU00469"/>
    </source>
</evidence>
<protein>
    <recommendedName>
        <fullName evidence="1">Transcription initiation factor IIB</fullName>
        <shortName evidence="1">TFIIB</shortName>
    </recommendedName>
</protein>
<proteinExistence type="inferred from homology"/>
<sequence length="334" mass="37847">MQEVEKLKLLQSEREALKSRIKVKEQEKKAENHTETVCPECGGRQLVHDYERAELVCQSCGLVIDDDFIDRGPEWRAFDHDQRMKRSRVGAPMTFTIHDKGLSTMIDWRNRDSYGRAISSKNRAQLYRLRKWQRRIRVSNATERNLAFALSELDRMASALGLPRNVRETAAVVYRDAVDKNLIRGRSIEGVAAAALYAACRQCSVPRTLDEIAEVSRVSRKEIGRTYRFISRELGLKLLPTSPIDYVPRFCSGLTLKGEVQSRAVEILRQAGERELTSGRGPTGVAAAAIYISSILGGERRTQREVAEVAGVTEVTIRNRYKELAEKLDIEIIL</sequence>
<reference key="1">
    <citation type="journal article" date="2015" name="Microbiology">
        <title>Genome of Methanoregula boonei 6A8 reveals adaptations to oligotrophic peatland environments.</title>
        <authorList>
            <person name="Braeuer S."/>
            <person name="Cadillo-Quiroz H."/>
            <person name="Kyrpides N."/>
            <person name="Woyke T."/>
            <person name="Goodwin L."/>
            <person name="Detter C."/>
            <person name="Podell S."/>
            <person name="Yavitt J.B."/>
            <person name="Zinder S.H."/>
        </authorList>
    </citation>
    <scope>NUCLEOTIDE SEQUENCE [LARGE SCALE GENOMIC DNA]</scope>
    <source>
        <strain>DSM 21154 / JCM 14090 / 6A8</strain>
    </source>
</reference>